<gene>
    <name evidence="1" type="primary">dcd</name>
    <name type="ordered locus">CbuK_0323</name>
</gene>
<evidence type="ECO:0000255" key="1">
    <source>
        <dbReference type="HAMAP-Rule" id="MF_00146"/>
    </source>
</evidence>
<proteinExistence type="inferred from homology"/>
<organism>
    <name type="scientific">Coxiella burnetii (strain CbuK_Q154)</name>
    <name type="common">Coxiella burnetii (strain Q154)</name>
    <dbReference type="NCBI Taxonomy" id="434924"/>
    <lineage>
        <taxon>Bacteria</taxon>
        <taxon>Pseudomonadati</taxon>
        <taxon>Pseudomonadota</taxon>
        <taxon>Gammaproteobacteria</taxon>
        <taxon>Legionellales</taxon>
        <taxon>Coxiellaceae</taxon>
        <taxon>Coxiella</taxon>
    </lineage>
</organism>
<protein>
    <recommendedName>
        <fullName evidence="1">dCTP deaminase</fullName>
        <ecNumber evidence="1">3.5.4.13</ecNumber>
    </recommendedName>
    <alternativeName>
        <fullName evidence="1">Deoxycytidine triphosphate deaminase</fullName>
    </alternativeName>
</protein>
<dbReference type="EC" id="3.5.4.13" evidence="1"/>
<dbReference type="EMBL" id="CP001020">
    <property type="protein sequence ID" value="ACJ19630.1"/>
    <property type="molecule type" value="Genomic_DNA"/>
</dbReference>
<dbReference type="RefSeq" id="WP_005770557.1">
    <property type="nucleotide sequence ID" value="NC_011528.1"/>
</dbReference>
<dbReference type="SMR" id="B6J4W5"/>
<dbReference type="KEGG" id="cbc:CbuK_0323"/>
<dbReference type="HOGENOM" id="CLU_087476_4_0_6"/>
<dbReference type="UniPathway" id="UPA00610">
    <property type="reaction ID" value="UER00665"/>
</dbReference>
<dbReference type="GO" id="GO:0008829">
    <property type="term" value="F:dCTP deaminase activity"/>
    <property type="evidence" value="ECO:0007669"/>
    <property type="project" value="UniProtKB-UniRule"/>
</dbReference>
<dbReference type="GO" id="GO:0000166">
    <property type="term" value="F:nucleotide binding"/>
    <property type="evidence" value="ECO:0007669"/>
    <property type="project" value="UniProtKB-KW"/>
</dbReference>
<dbReference type="GO" id="GO:0006226">
    <property type="term" value="P:dUMP biosynthetic process"/>
    <property type="evidence" value="ECO:0007669"/>
    <property type="project" value="UniProtKB-UniPathway"/>
</dbReference>
<dbReference type="GO" id="GO:0006229">
    <property type="term" value="P:dUTP biosynthetic process"/>
    <property type="evidence" value="ECO:0007669"/>
    <property type="project" value="UniProtKB-UniRule"/>
</dbReference>
<dbReference type="GO" id="GO:0015949">
    <property type="term" value="P:nucleobase-containing small molecule interconversion"/>
    <property type="evidence" value="ECO:0007669"/>
    <property type="project" value="TreeGrafter"/>
</dbReference>
<dbReference type="CDD" id="cd07557">
    <property type="entry name" value="trimeric_dUTPase"/>
    <property type="match status" value="1"/>
</dbReference>
<dbReference type="FunFam" id="2.70.40.10:FF:000001">
    <property type="entry name" value="dCTP deaminase"/>
    <property type="match status" value="1"/>
</dbReference>
<dbReference type="Gene3D" id="2.70.40.10">
    <property type="match status" value="1"/>
</dbReference>
<dbReference type="HAMAP" id="MF_00146">
    <property type="entry name" value="dCTP_deaminase"/>
    <property type="match status" value="1"/>
</dbReference>
<dbReference type="InterPro" id="IPR011962">
    <property type="entry name" value="dCTP_deaminase"/>
</dbReference>
<dbReference type="InterPro" id="IPR036157">
    <property type="entry name" value="dUTPase-like_sf"/>
</dbReference>
<dbReference type="InterPro" id="IPR033704">
    <property type="entry name" value="dUTPase_trimeric"/>
</dbReference>
<dbReference type="NCBIfam" id="TIGR02274">
    <property type="entry name" value="dCTP_deam"/>
    <property type="match status" value="1"/>
</dbReference>
<dbReference type="PANTHER" id="PTHR42680">
    <property type="entry name" value="DCTP DEAMINASE"/>
    <property type="match status" value="1"/>
</dbReference>
<dbReference type="PANTHER" id="PTHR42680:SF3">
    <property type="entry name" value="DCTP DEAMINASE"/>
    <property type="match status" value="1"/>
</dbReference>
<dbReference type="Pfam" id="PF22769">
    <property type="entry name" value="DCD"/>
    <property type="match status" value="1"/>
</dbReference>
<dbReference type="SUPFAM" id="SSF51283">
    <property type="entry name" value="dUTPase-like"/>
    <property type="match status" value="1"/>
</dbReference>
<feature type="chain" id="PRO_1000096418" description="dCTP deaminase">
    <location>
        <begin position="1"/>
        <end position="188"/>
    </location>
</feature>
<feature type="active site" description="Proton donor/acceptor" evidence="1">
    <location>
        <position position="137"/>
    </location>
</feature>
<feature type="binding site" evidence="1">
    <location>
        <begin position="111"/>
        <end position="116"/>
    </location>
    <ligand>
        <name>dCTP</name>
        <dbReference type="ChEBI" id="CHEBI:61481"/>
    </ligand>
</feature>
<feature type="binding site" evidence="1">
    <location>
        <begin position="135"/>
        <end position="137"/>
    </location>
    <ligand>
        <name>dCTP</name>
        <dbReference type="ChEBI" id="CHEBI:61481"/>
    </ligand>
</feature>
<feature type="binding site" evidence="1">
    <location>
        <position position="156"/>
    </location>
    <ligand>
        <name>dCTP</name>
        <dbReference type="ChEBI" id="CHEBI:61481"/>
    </ligand>
</feature>
<feature type="binding site" evidence="1">
    <location>
        <position position="170"/>
    </location>
    <ligand>
        <name>dCTP</name>
        <dbReference type="ChEBI" id="CHEBI:61481"/>
    </ligand>
</feature>
<feature type="binding site" evidence="1">
    <location>
        <position position="180"/>
    </location>
    <ligand>
        <name>dCTP</name>
        <dbReference type="ChEBI" id="CHEBI:61481"/>
    </ligand>
</feature>
<reference key="1">
    <citation type="journal article" date="2009" name="Infect. Immun.">
        <title>Comparative genomics reveal extensive transposon-mediated genomic plasticity and diversity among potential effector proteins within the genus Coxiella.</title>
        <authorList>
            <person name="Beare P.A."/>
            <person name="Unsworth N."/>
            <person name="Andoh M."/>
            <person name="Voth D.E."/>
            <person name="Omsland A."/>
            <person name="Gilk S.D."/>
            <person name="Williams K.P."/>
            <person name="Sobral B.W."/>
            <person name="Kupko J.J. III"/>
            <person name="Porcella S.F."/>
            <person name="Samuel J.E."/>
            <person name="Heinzen R.A."/>
        </authorList>
    </citation>
    <scope>NUCLEOTIDE SEQUENCE [LARGE SCALE GENOMIC DNA]</scope>
    <source>
        <strain>CbuK_Q154</strain>
    </source>
</reference>
<comment type="function">
    <text evidence="1">Catalyzes the deamination of dCTP to dUTP.</text>
</comment>
<comment type="catalytic activity">
    <reaction evidence="1">
        <text>dCTP + H2O + H(+) = dUTP + NH4(+)</text>
        <dbReference type="Rhea" id="RHEA:22680"/>
        <dbReference type="ChEBI" id="CHEBI:15377"/>
        <dbReference type="ChEBI" id="CHEBI:15378"/>
        <dbReference type="ChEBI" id="CHEBI:28938"/>
        <dbReference type="ChEBI" id="CHEBI:61481"/>
        <dbReference type="ChEBI" id="CHEBI:61555"/>
        <dbReference type="EC" id="3.5.4.13"/>
    </reaction>
</comment>
<comment type="pathway">
    <text evidence="1">Pyrimidine metabolism; dUMP biosynthesis; dUMP from dCTP (dUTP route): step 1/2.</text>
</comment>
<comment type="subunit">
    <text evidence="1">Homotrimer.</text>
</comment>
<comment type="similarity">
    <text evidence="1">Belongs to the dCTP deaminase family.</text>
</comment>
<name>DCD_COXB1</name>
<keyword id="KW-0378">Hydrolase</keyword>
<keyword id="KW-0546">Nucleotide metabolism</keyword>
<keyword id="KW-0547">Nucleotide-binding</keyword>
<sequence>MPIKSDKWIRRMAESHQLIYPFEPKQVRETPSGKVISYGTSSYGYDVRCADEFKIFTNINASIVDPKNFDPNGFIDLKANVCIIPPNSFVLARTVEYFKIPRNILTICLGKSTYARCGIIVNVTPLEPEWEGHVTLEFSNTTNLPAKIYANEGVAQMLFLESDEVCDISYKDRGGKYQGQKGVTLPVA</sequence>
<accession>B6J4W5</accession>